<dbReference type="EC" id="3.6.5.-" evidence="1"/>
<dbReference type="EMBL" id="CP000653">
    <property type="protein sequence ID" value="ABP62276.1"/>
    <property type="molecule type" value="Genomic_DNA"/>
</dbReference>
<dbReference type="RefSeq" id="WP_015960601.1">
    <property type="nucleotide sequence ID" value="NC_009436.1"/>
</dbReference>
<dbReference type="SMR" id="A4WEZ6"/>
<dbReference type="STRING" id="399742.Ent638_3619"/>
<dbReference type="KEGG" id="ent:Ent638_3619"/>
<dbReference type="eggNOG" id="COG0536">
    <property type="taxonomic scope" value="Bacteria"/>
</dbReference>
<dbReference type="HOGENOM" id="CLU_011747_2_0_6"/>
<dbReference type="OrthoDB" id="9807318at2"/>
<dbReference type="Proteomes" id="UP000000230">
    <property type="component" value="Chromosome"/>
</dbReference>
<dbReference type="GO" id="GO:0005737">
    <property type="term" value="C:cytoplasm"/>
    <property type="evidence" value="ECO:0007669"/>
    <property type="project" value="UniProtKB-SubCell"/>
</dbReference>
<dbReference type="GO" id="GO:0005525">
    <property type="term" value="F:GTP binding"/>
    <property type="evidence" value="ECO:0007669"/>
    <property type="project" value="UniProtKB-UniRule"/>
</dbReference>
<dbReference type="GO" id="GO:0003924">
    <property type="term" value="F:GTPase activity"/>
    <property type="evidence" value="ECO:0007669"/>
    <property type="project" value="UniProtKB-UniRule"/>
</dbReference>
<dbReference type="GO" id="GO:0000287">
    <property type="term" value="F:magnesium ion binding"/>
    <property type="evidence" value="ECO:0007669"/>
    <property type="project" value="InterPro"/>
</dbReference>
<dbReference type="GO" id="GO:0042254">
    <property type="term" value="P:ribosome biogenesis"/>
    <property type="evidence" value="ECO:0007669"/>
    <property type="project" value="UniProtKB-UniRule"/>
</dbReference>
<dbReference type="CDD" id="cd01898">
    <property type="entry name" value="Obg"/>
    <property type="match status" value="1"/>
</dbReference>
<dbReference type="FunFam" id="2.70.210.12:FF:000001">
    <property type="entry name" value="GTPase Obg"/>
    <property type="match status" value="1"/>
</dbReference>
<dbReference type="FunFam" id="3.40.50.300:FF:000185">
    <property type="entry name" value="GTPase Obg"/>
    <property type="match status" value="1"/>
</dbReference>
<dbReference type="Gene3D" id="2.70.210.12">
    <property type="entry name" value="GTP1/OBG domain"/>
    <property type="match status" value="1"/>
</dbReference>
<dbReference type="Gene3D" id="3.40.50.300">
    <property type="entry name" value="P-loop containing nucleotide triphosphate hydrolases"/>
    <property type="match status" value="1"/>
</dbReference>
<dbReference type="HAMAP" id="MF_01454">
    <property type="entry name" value="GTPase_Obg"/>
    <property type="match status" value="1"/>
</dbReference>
<dbReference type="InterPro" id="IPR031167">
    <property type="entry name" value="G_OBG"/>
</dbReference>
<dbReference type="InterPro" id="IPR006073">
    <property type="entry name" value="GTP-bd"/>
</dbReference>
<dbReference type="InterPro" id="IPR014100">
    <property type="entry name" value="GTP-bd_Obg/CgtA"/>
</dbReference>
<dbReference type="InterPro" id="IPR006074">
    <property type="entry name" value="GTP1-OBG_CS"/>
</dbReference>
<dbReference type="InterPro" id="IPR006169">
    <property type="entry name" value="GTP1_OBG_dom"/>
</dbReference>
<dbReference type="InterPro" id="IPR036726">
    <property type="entry name" value="GTP1_OBG_dom_sf"/>
</dbReference>
<dbReference type="InterPro" id="IPR045086">
    <property type="entry name" value="OBG_GTPase"/>
</dbReference>
<dbReference type="InterPro" id="IPR027417">
    <property type="entry name" value="P-loop_NTPase"/>
</dbReference>
<dbReference type="NCBIfam" id="TIGR02729">
    <property type="entry name" value="Obg_CgtA"/>
    <property type="match status" value="1"/>
</dbReference>
<dbReference type="NCBIfam" id="NF008955">
    <property type="entry name" value="PRK12297.1"/>
    <property type="match status" value="1"/>
</dbReference>
<dbReference type="NCBIfam" id="NF008956">
    <property type="entry name" value="PRK12299.1"/>
    <property type="match status" value="1"/>
</dbReference>
<dbReference type="PANTHER" id="PTHR11702">
    <property type="entry name" value="DEVELOPMENTALLY REGULATED GTP-BINDING PROTEIN-RELATED"/>
    <property type="match status" value="1"/>
</dbReference>
<dbReference type="PANTHER" id="PTHR11702:SF31">
    <property type="entry name" value="MITOCHONDRIAL RIBOSOME-ASSOCIATED GTPASE 2"/>
    <property type="match status" value="1"/>
</dbReference>
<dbReference type="Pfam" id="PF01018">
    <property type="entry name" value="GTP1_OBG"/>
    <property type="match status" value="1"/>
</dbReference>
<dbReference type="Pfam" id="PF01926">
    <property type="entry name" value="MMR_HSR1"/>
    <property type="match status" value="1"/>
</dbReference>
<dbReference type="PIRSF" id="PIRSF002401">
    <property type="entry name" value="GTP_bd_Obg/CgtA"/>
    <property type="match status" value="1"/>
</dbReference>
<dbReference type="PRINTS" id="PR00326">
    <property type="entry name" value="GTP1OBG"/>
</dbReference>
<dbReference type="SUPFAM" id="SSF82051">
    <property type="entry name" value="Obg GTP-binding protein N-terminal domain"/>
    <property type="match status" value="1"/>
</dbReference>
<dbReference type="SUPFAM" id="SSF52540">
    <property type="entry name" value="P-loop containing nucleoside triphosphate hydrolases"/>
    <property type="match status" value="1"/>
</dbReference>
<dbReference type="PROSITE" id="PS51710">
    <property type="entry name" value="G_OBG"/>
    <property type="match status" value="1"/>
</dbReference>
<dbReference type="PROSITE" id="PS00905">
    <property type="entry name" value="GTP1_OBG"/>
    <property type="match status" value="1"/>
</dbReference>
<dbReference type="PROSITE" id="PS51883">
    <property type="entry name" value="OBG"/>
    <property type="match status" value="1"/>
</dbReference>
<evidence type="ECO:0000255" key="1">
    <source>
        <dbReference type="HAMAP-Rule" id="MF_01454"/>
    </source>
</evidence>
<evidence type="ECO:0000255" key="2">
    <source>
        <dbReference type="PROSITE-ProRule" id="PRU01231"/>
    </source>
</evidence>
<evidence type="ECO:0000256" key="3">
    <source>
        <dbReference type="SAM" id="MobiDB-lite"/>
    </source>
</evidence>
<keyword id="KW-0963">Cytoplasm</keyword>
<keyword id="KW-0342">GTP-binding</keyword>
<keyword id="KW-0378">Hydrolase</keyword>
<keyword id="KW-0460">Magnesium</keyword>
<keyword id="KW-0479">Metal-binding</keyword>
<keyword id="KW-0547">Nucleotide-binding</keyword>
<organism>
    <name type="scientific">Enterobacter sp. (strain 638)</name>
    <dbReference type="NCBI Taxonomy" id="399742"/>
    <lineage>
        <taxon>Bacteria</taxon>
        <taxon>Pseudomonadati</taxon>
        <taxon>Pseudomonadota</taxon>
        <taxon>Gammaproteobacteria</taxon>
        <taxon>Enterobacterales</taxon>
        <taxon>Enterobacteriaceae</taxon>
        <taxon>Enterobacter</taxon>
    </lineage>
</organism>
<protein>
    <recommendedName>
        <fullName evidence="1">GTPase Obg</fullName>
        <ecNumber evidence="1">3.6.5.-</ecNumber>
    </recommendedName>
    <alternativeName>
        <fullName evidence="1">GTP-binding protein Obg</fullName>
    </alternativeName>
</protein>
<gene>
    <name evidence="1" type="primary">obg</name>
    <name type="ordered locus">Ent638_3619</name>
</gene>
<proteinExistence type="inferred from homology"/>
<feature type="chain" id="PRO_0000385905" description="GTPase Obg">
    <location>
        <begin position="1"/>
        <end position="392"/>
    </location>
</feature>
<feature type="domain" description="Obg" evidence="2">
    <location>
        <begin position="1"/>
        <end position="159"/>
    </location>
</feature>
<feature type="domain" description="OBG-type G" evidence="1">
    <location>
        <begin position="160"/>
        <end position="333"/>
    </location>
</feature>
<feature type="region of interest" description="Disordered" evidence="3">
    <location>
        <begin position="127"/>
        <end position="148"/>
    </location>
</feature>
<feature type="region of interest" description="Disordered" evidence="3">
    <location>
        <begin position="363"/>
        <end position="392"/>
    </location>
</feature>
<feature type="compositionally biased region" description="Polar residues" evidence="3">
    <location>
        <begin position="129"/>
        <end position="143"/>
    </location>
</feature>
<feature type="compositionally biased region" description="Acidic residues" evidence="3">
    <location>
        <begin position="363"/>
        <end position="386"/>
    </location>
</feature>
<feature type="binding site" evidence="1">
    <location>
        <begin position="166"/>
        <end position="173"/>
    </location>
    <ligand>
        <name>GTP</name>
        <dbReference type="ChEBI" id="CHEBI:37565"/>
    </ligand>
</feature>
<feature type="binding site" evidence="1">
    <location>
        <position position="173"/>
    </location>
    <ligand>
        <name>Mg(2+)</name>
        <dbReference type="ChEBI" id="CHEBI:18420"/>
    </ligand>
</feature>
<feature type="binding site" evidence="1">
    <location>
        <begin position="191"/>
        <end position="195"/>
    </location>
    <ligand>
        <name>GTP</name>
        <dbReference type="ChEBI" id="CHEBI:37565"/>
    </ligand>
</feature>
<feature type="binding site" evidence="1">
    <location>
        <position position="193"/>
    </location>
    <ligand>
        <name>Mg(2+)</name>
        <dbReference type="ChEBI" id="CHEBI:18420"/>
    </ligand>
</feature>
<feature type="binding site" evidence="1">
    <location>
        <begin position="213"/>
        <end position="216"/>
    </location>
    <ligand>
        <name>GTP</name>
        <dbReference type="ChEBI" id="CHEBI:37565"/>
    </ligand>
</feature>
<feature type="binding site" evidence="1">
    <location>
        <begin position="283"/>
        <end position="286"/>
    </location>
    <ligand>
        <name>GTP</name>
        <dbReference type="ChEBI" id="CHEBI:37565"/>
    </ligand>
</feature>
<feature type="binding site" evidence="1">
    <location>
        <begin position="314"/>
        <end position="316"/>
    </location>
    <ligand>
        <name>GTP</name>
        <dbReference type="ChEBI" id="CHEBI:37565"/>
    </ligand>
</feature>
<name>OBG_ENT38</name>
<comment type="function">
    <text evidence="1">An essential GTPase which binds GTP, GDP and possibly (p)ppGpp with moderate affinity, with high nucleotide exchange rates and a fairly low GTP hydrolysis rate. Plays a role in control of the cell cycle, stress response, ribosome biogenesis and in those bacteria that undergo differentiation, in morphogenesis control.</text>
</comment>
<comment type="cofactor">
    <cofactor evidence="1">
        <name>Mg(2+)</name>
        <dbReference type="ChEBI" id="CHEBI:18420"/>
    </cofactor>
</comment>
<comment type="subunit">
    <text evidence="1">Monomer.</text>
</comment>
<comment type="subcellular location">
    <subcellularLocation>
        <location evidence="1">Cytoplasm</location>
    </subcellularLocation>
</comment>
<comment type="similarity">
    <text evidence="1">Belongs to the TRAFAC class OBG-HflX-like GTPase superfamily. OBG GTPase family.</text>
</comment>
<reference key="1">
    <citation type="journal article" date="2010" name="PLoS Genet.">
        <title>Genome sequence of the plant growth promoting endophytic bacterium Enterobacter sp. 638.</title>
        <authorList>
            <person name="Taghavi S."/>
            <person name="van der Lelie D."/>
            <person name="Hoffman A."/>
            <person name="Zhang Y.B."/>
            <person name="Walla M.D."/>
            <person name="Vangronsveld J."/>
            <person name="Newman L."/>
            <person name="Monchy S."/>
        </authorList>
    </citation>
    <scope>NUCLEOTIDE SEQUENCE [LARGE SCALE GENOMIC DNA]</scope>
    <source>
        <strain>638</strain>
    </source>
</reference>
<accession>A4WEZ6</accession>
<sequence length="392" mass="43581">MKFVDEATILVVAGDGGNGCVSFRREKYIPRGGPDGGDGGDGGDVWLEADENLNTLIDYRFEKSFRAERGQNGQSRDCTGKRGKDVTVKVPVGTRVIDQGTGETLGDMTKHGQRLMVGKGGWHGLGNSRFKSSVNRSPRQKTMGTPGDKRDLQLELMLLADVGMLGMPNAGKSTFIRSVSAAKPKVADYPFTTLVPSLGVVRMDNEKSFVVADIPGLIEGAAEGAGLGIRFLKHLERCRVLLHLIDIDPIDGSDPVENARIIVGELEKYSDKLAAKPRWLVFNKIDLMDKAEAEAKAKAIAEAMGWEDKYYLISAASQMGVKDLCWDVMAFIIENPITQAEEAKQPEKVEFMWDDYHRQQLEEQEVEVEDDEEWDEDWDEDDEEGVEFIYKR</sequence>